<comment type="function">
    <text evidence="1 2 4">Multifunctional redox sensitive protein with various roles in different cellular compartments. In the nucleus is one of the major chromatin-associated non-histone proteins and acts as a DNA chaperone involved in replication, transcription, chromatin remodeling, V(D)J recombination, DNA repair and genome stability. Proposed to be an universal biosensor for nucleic acids. Promotes host inflammatory response to sterile and infectious signals and is involved in the coordination and integration of innate and adaptive immune responses. In the cytoplasm functions as a sensor and/or chaperone for immunogenic nucleic acids implicating the activation of TLR9-mediated immune responses, and mediates autophagy. Acts as a danger-associated molecular pattern (DAMP) molecule that amplifies immune responses during tissue injury. Released to the extracellular environment can bind DNA, nucleosomes, IL-1 beta, CXCL12, AGER isoform 2/sRAGE, lipopolysaccharide (LPS) and lipoteichoic acid (LTA), and activates cells through engagement of multiple surface receptors. In the extracellular compartment fully reduced HMGB1 (released by necrosis) acts as a chemokine, disulfide HMGB1 (actively secreted) as a cytokine, and sulfonyl HMGB1 (released from apoptotic cells) promotes immunological tolerance. Has proangiogenic activity. May be involved in platelet activation. Binds to phosphatidylserine and phosphatidylethanolamide. Bound to RAGE mediates signaling for neuronal outgrowth. May play a role in accumulation of expanded polyglutamine (polyQ) proteins.</text>
</comment>
<comment type="function">
    <text evidence="1 2 3 4">Nuclear functions are attributed to fully reduced HGMB1. Associates with chromatin and binds DNA with a preference to non-canonical DNA structures such as single-stranded DNA, DNA-containing cruciforms or bent structures, supercoiled DNA and ZDNA. Can bent DNA and enhance DNA flexibility by looping thus providing a mechanism to promote activities on various gene promoters by enhancing transcription factor binding and/or bringing distant regulatory sequences into close proximity. May be involved in nucleotide excision repair (NER), mismatch repair (MMR) and base excision repair (BER) pathways, and double strand break repair such as non-homologous end joining (NHEJ). Involved in V(D)J recombination by acting as a cofactor of the RAG complex: acts by stimulating cleavage and RAG protein binding at the 23 bp spacer of conserved recombination signal sequences (RSS). In vitro can displace histone H1 from highly bent DNA. Can restructure the canonical nucleosome leading to relaxation of structural constraints for transcription factor-binding. Enhances binding of sterol regulatory element-binding proteins (SREBPs) such as SREBF1 to their cognate DNA sequences and increases their transcriptional activities. Facilitates binding of TP53 to DNA. May be involved in mitochondrial quality control and autophagy in a transcription-dependent fashion implicating HSPB1. Can modulate the activity of the telomerase complex and may be involved in telomere maintenance.</text>
</comment>
<comment type="function">
    <text evidence="1 3">In the cytoplasm proposed to dissociate the BECN1:BCL2 complex via competitive interaction with BECN1 leading to autophagy activation. Can protect BECN1 and ATG5 from calpain-mediated cleavage and thus proposed to control their proautophagic and proapoptotic functions and to regulate the extent and severity of inflammation-associated cellular injury. In myeloid cells has a protective role against endotoxemia and bacterial infection by promoting autophagy. Involved in endosomal translocation and activation of TLR9 in response to CpG-DNA in macrophages.</text>
</comment>
<comment type="function">
    <text evidence="1 2 3 4">In the extracellular compartment (following either active secretion or passive release) involved in regulation of the inflammatory response. Fully reduced HGMB1 (which subsequently gets oxidized after release) in association with CXCL12 mediates the recruitment of inflammatory cells during the initial phase of tissue injury; the CXCL12:HMGB1 complex triggers CXCR4 homodimerization. Induces the migration of monocyte-derived immature dendritic cells and seems to regulate adhesive and migratory functions of neutrophils implicating AGER/RAGE and ITGAM. Can bind to various types of DNA and RNA including microbial unmethylated CpG-DNA to enhance the innate immune response to nucleic acids. Proposed to act in promiscuous DNA/RNA sensing which cooperates with subsequent discriminative sensing by specific pattern recognition receptors. Promotes extracellular DNA-induced AIM2 inflammasome activation implicating AGER/RAGE. Disulfide HMGB1 binds to transmembrane receptors, such as AGER/RAGE, TLR2, TLR4 and probably TREM1, thus activating their signal transduction pathways. Mediates the release of cytokines/chemokines such as TNF, IL-1, IL-6, IL-8, CCL2, CCL3, CCL4 and CXCL10. Promotes secretion of interferon-gamma by macrophage-stimulated natural killer (NK) cells in concert with other cytokines like IL-2 or IL-12. TLR4 is proposed to be the primary receptor promoting macrophage activation and signaling through TLR4 seems to implicate LY96/MD-2. In bacterial LPS- or LTA-mediated inflammatory responses binds to the endotoxins and transfers them to CD14 for signaling to the respective TLR4:LY96 and TLR2 complexes. Contributes to tumor proliferation by association with ACER/RAGE. Can bind to IL1-beta and signals through the IL1R1:IL1RAP receptor complex. Binding to class A CpG activates cytokine production in plasmacytoid dendritic cells implicating TLR9, MYD88 and AGER/RAGE and can activate autoreactive B cells. Via HMGB1-containing chromatin immune complexes may also promote B cell responses to endogenous TLR9 ligands through a B-cell receptor (BCR)-dependent and ACER/RAGE-independent mechanism. Inhibits phagocytosis of apoptotic cells by macrophages; the function is dependent on poly-ADP-ribosylation and involves binding to phosphatidylserine on the cell surface of apoptotic cells. In adaptive immunity may be involved in enhancing immunity through activation of effector T-cells and suppression of regulatory T (TReg) cells. In contrast, without implicating effector or regulatory T-cells, required for tumor infiltration and activation of T-cells expressing the lymphotoxin LTA:LTB heterotrimer thus promoting tumor malignant progression. Also reported to limit proliferation of T-cells. Released HMGB1:nucleosome complexes formed during apoptosis can signal through TLR2 to induce cytokine production. Involved in induction of immunological tolerance by apoptotic cells; its pro-inflammatory activities when released by apoptotic cells are neutralized by reactive oxygen species (ROS)-dependent oxidation specifically on Cys-106. During macrophage activation by activated lymphocyte-derived self apoptotic DNA (ALD-DNA) promotes recruitment of ALD-DNA to endosomes.</text>
</comment>
<comment type="subunit">
    <text evidence="1 3 4">Interacts (fully reduced HMGB1) with CXCL12; probably in a 1:2 ratio involving two molecules of CXCL12, each interacting with one HMG box of HMGB1; inhibited by glycyrrhizin. Associates with the TLR4:LY96 receptor complex. Component of the RAG complex composed of core components RAG1 and RAG2, and associated component HMGB1 or HMGB2. Interacts (in cytoplasm upon starvation) with BECN1; inhibits the interaction of BECN1 and BCL2 leading to promotion of autophagy. Interacts with KPNA1; involved in nuclear import. Interacts with SREBF1, TLR2, TLR4, TLR9, PTPRZ1, APEX1, FEN1, POLB, TERT. Interacts with IL1B, AGER, MSH2, XPA, XPC, HNF1A, TP53. Interacts with CD24; the probable CD24:SIGLEC10 complex is proposed to inhibit HGMB1-mediated tissue damage immune response. Interacts with THBD; prevents HGMB1 interaction with ACER/RAGE and inhibits HGMB1 pro-inflammatory activity. Interacts with HAVCR2; impairs HMGB1 binding to B-DNA and likely HMGB1-mediated innate immune response. Interacts with XPO1; mediating nuclear export. Interacts with receptor RAGE/AGER (By similarity).</text>
</comment>
<comment type="subcellular location">
    <subcellularLocation>
        <location evidence="1">Nucleus</location>
    </subcellularLocation>
    <subcellularLocation>
        <location evidence="2 4">Chromosome</location>
    </subcellularLocation>
    <subcellularLocation>
        <location evidence="1">Cytoplasm</location>
    </subcellularLocation>
    <subcellularLocation>
        <location evidence="1 3">Secreted</location>
    </subcellularLocation>
    <subcellularLocation>
        <location evidence="1 3 4">Cell membrane</location>
        <topology evidence="1 3 4">Peripheral membrane protein</topology>
        <orientation evidence="1 3 4">Extracellular side</orientation>
    </subcellularLocation>
    <subcellularLocation>
        <location evidence="3">Endosome</location>
    </subcellularLocation>
    <subcellularLocation>
        <location evidence="3">Endoplasmic reticulum-Golgi intermediate compartment</location>
    </subcellularLocation>
    <text evidence="1 3">In basal state predominantly nuclear. Shuttles between the cytoplasm and the nucleus. Translocates from the nucleus to the cytoplasm upon autophagy stimulation. Release from macrophages in the extracellular milieu requires the activation of NLRC4 or NLRP3 inflammasomes (By similarity). Passively released to the extracellular milieu from necrotic cells by diffusion, involving the fully reduced HGMB1 which subsequently gets oxidized. Also released from apoptotic cells. Active secretion from a variety of immune and non-immune cells such as macrophages, monocytes, neutrophils, dendritic cells, natural killer cells and plasma cells in response to various stimuli such as LPS and cytokines involves a nonconventional secretory process via secretory lysosomes. Found on the surface of activated platelets.</text>
</comment>
<comment type="domain">
    <text evidence="1">HMG box 2 mediates pro-inflammatory cytokine-stimulating activity and binding to TLR4. However, not involved in mediating immunogenic activity in the context of apoptosis-induced immune tolerance.</text>
</comment>
<comment type="domain">
    <text evidence="1 4">The acidic C-terminal domain forms a flexible structure which can reversibly interact intramolecularily with the HMG boxes and modulate binding to DNA and other proteins.</text>
</comment>
<comment type="PTM">
    <text evidence="1">Phosphorylated at serine residues. Phosphorylation in both NLS regions is required for cytoplasmic translocation followed by secretion.</text>
</comment>
<comment type="PTM">
    <text evidence="1 2 4">Acetylated on multiple sites upon stimulation with LPS (By similarity). Acetylation on lysine residues in the nuclear localization signals (NLS 1 and NLS 2) leads to cytoplasmic localization and subsequent secretion. Acetylation on Lys-3 results in preferential binding to DNA ends and impairs DNA bending activity (By similarity).</text>
</comment>
<comment type="PTM">
    <text evidence="1">Reduction/oxidation of cysteine residues Cys-23, Cys-45 and Cys-106 and a possible intramolecular disulfide bond involving Cys-23 and Cys-45 give rise to different redox forms with specific functional activities in various cellular compartments: 1- fully reduced HMGB1 (HMGB1C23hC45hC106h), 2- disulfide HMGB1 (HMGB1C23-C45C106h) and 3- sulfonyl HMGB1 (HMGB1C23soC45soC106so).</text>
</comment>
<comment type="PTM">
    <text evidence="3">Poly-ADP-ribosylated by PARP1 when secreted following stimulation with LPS (By similarity).</text>
</comment>
<comment type="PTM">
    <text evidence="1 2">In vitro cleavage by CASP1 is liberating a HMG box 1-containing peptide which may mediate immunogenic activity; the peptide antagonizes apoptosis-induced immune tolerance. Can be proteolytically cleaved by a thrombin:thrombomodulin complex; reduces binding to heparin and pro-inflammatory activities (By similarity).</text>
</comment>
<comment type="PTM">
    <text evidence="1">Forms covalent cross-links mediated by transglutaminase TGM2, between a glutamine and the epsilon-amino group of a lysine residue, forming homopolymers and heteropolymers.</text>
</comment>
<comment type="similarity">
    <text evidence="7">Belongs to the HMGB family.</text>
</comment>
<sequence>MGKGDPKKPRGKMSSYAFFVQTCREEHKKKHPDASVNFSEFSKKCSERWKTMSAKEKGKFEDMAKADKARYEREMKTYIPPKGETKKKFKDPNAPKRPPSAFFLFCSEYRPKIKGEHPGLSIGDVAKKLGEMWNNTAADDKQPYEKKAAKLKEKYEKDIAAYRAKGKPDAAKKGVVKAEKSKKKKEEEEDEEDEEDEEEEEDEEDEDEEEDDDDE</sequence>
<feature type="chain" id="PRO_0000333884" description="High mobility group protein B1">
    <location>
        <begin position="1"/>
        <end position="215"/>
    </location>
</feature>
<feature type="DNA-binding region" description="HMG box 1" evidence="5">
    <location>
        <begin position="9"/>
        <end position="79"/>
    </location>
</feature>
<feature type="DNA-binding region" description="HMG box 2" evidence="5">
    <location>
        <begin position="95"/>
        <end position="163"/>
    </location>
</feature>
<feature type="region of interest" description="Sufficient for interaction with HAVCR2" evidence="3">
    <location>
        <begin position="1"/>
        <end position="97"/>
    </location>
</feature>
<feature type="region of interest" description="LPS binding (delipidated)" evidence="1">
    <location>
        <begin position="3"/>
        <end position="15"/>
    </location>
</feature>
<feature type="region of interest" description="NLS 1" evidence="4">
    <location>
        <begin position="27"/>
        <end position="43"/>
    </location>
</feature>
<feature type="region of interest" description="Disordered" evidence="6">
    <location>
        <begin position="76"/>
        <end position="95"/>
    </location>
</feature>
<feature type="region of interest" description="LPS binding (Lipid A)" evidence="1">
    <location>
        <begin position="80"/>
        <end position="96"/>
    </location>
</feature>
<feature type="region of interest" description="Cytokine-stimulating activity" evidence="1">
    <location>
        <begin position="89"/>
        <end position="108"/>
    </location>
</feature>
<feature type="region of interest" description="Binding to AGER/RAGE" evidence="4">
    <location>
        <begin position="150"/>
        <end position="183"/>
    </location>
</feature>
<feature type="region of interest" description="Disordered" evidence="6">
    <location>
        <begin position="161"/>
        <end position="215"/>
    </location>
</feature>
<feature type="region of interest" description="NLS 2" evidence="4">
    <location>
        <begin position="178"/>
        <end position="184"/>
    </location>
</feature>
<feature type="short sequence motif" description="Nuclear localization signal (NLS) 1" evidence="4">
    <location>
        <begin position="27"/>
        <end position="43"/>
    </location>
</feature>
<feature type="short sequence motif" description="Nuclear localization signal (NLS) 2" evidence="4">
    <location>
        <begin position="178"/>
        <end position="184"/>
    </location>
</feature>
<feature type="compositionally biased region" description="Basic and acidic residues" evidence="6">
    <location>
        <begin position="83"/>
        <end position="94"/>
    </location>
</feature>
<feature type="compositionally biased region" description="Basic and acidic residues" evidence="6">
    <location>
        <begin position="161"/>
        <end position="179"/>
    </location>
</feature>
<feature type="compositionally biased region" description="Acidic residues" evidence="6">
    <location>
        <begin position="187"/>
        <end position="215"/>
    </location>
</feature>
<feature type="binding site" evidence="2">
    <location>
        <begin position="1"/>
        <end position="10"/>
    </location>
    <ligand>
        <name>heparin</name>
        <dbReference type="ChEBI" id="CHEBI:28304"/>
    </ligand>
</feature>
<feature type="site" description="Cleavage; by thrombin:thrombomodulin" evidence="2">
    <location>
        <begin position="10"/>
        <end position="11"/>
    </location>
</feature>
<feature type="site" description="Cleavage; by CASP1" evidence="1">
    <location>
        <begin position="67"/>
        <end position="68"/>
    </location>
</feature>
<feature type="modified residue" description="N6-acetyllysine" evidence="2">
    <location>
        <position position="3"/>
    </location>
</feature>
<feature type="modified residue" description="N6-acetyllysine" evidence="2">
    <location>
        <position position="7"/>
    </location>
</feature>
<feature type="modified residue" description="N6-acetyllysine" evidence="2">
    <location>
        <position position="8"/>
    </location>
</feature>
<feature type="modified residue" description="N6-acetyllysine" evidence="2">
    <location>
        <position position="12"/>
    </location>
</feature>
<feature type="modified residue" description="Cysteine sulfonic acid (-SO3H); alternate" evidence="4">
    <location>
        <position position="23"/>
    </location>
</feature>
<feature type="modified residue" description="N6-acetyllysine" evidence="2">
    <location>
        <position position="28"/>
    </location>
</feature>
<feature type="modified residue" description="N6-acetyllysine" evidence="2">
    <location>
        <position position="29"/>
    </location>
</feature>
<feature type="modified residue" description="N6-acetyllysine" evidence="2">
    <location>
        <position position="30"/>
    </location>
</feature>
<feature type="modified residue" description="Phosphoserine" evidence="1">
    <location>
        <position position="35"/>
    </location>
</feature>
<feature type="modified residue" description="N6-acetyllysine" evidence="3">
    <location>
        <position position="43"/>
    </location>
</feature>
<feature type="modified residue" description="Cysteine sulfonic acid (-SO3H); alternate" evidence="4">
    <location>
        <position position="45"/>
    </location>
</feature>
<feature type="modified residue" description="N6-acetyllysine" evidence="3">
    <location>
        <position position="90"/>
    </location>
</feature>
<feature type="modified residue" description="Phosphoserine" evidence="1">
    <location>
        <position position="100"/>
    </location>
</feature>
<feature type="modified residue" description="Cysteine sulfonic acid (-SO3H)" evidence="4">
    <location>
        <position position="106"/>
    </location>
</feature>
<feature type="modified residue" description="N6-acetyllysine" evidence="2">
    <location>
        <position position="127"/>
    </location>
</feature>
<feature type="modified residue" description="N6-acetyllysine" evidence="2">
    <location>
        <position position="128"/>
    </location>
</feature>
<feature type="modified residue" description="N6-acetyllysine" evidence="3">
    <location>
        <position position="141"/>
    </location>
</feature>
<feature type="modified residue" description="N6-acetyllysine" evidence="2">
    <location>
        <position position="172"/>
    </location>
</feature>
<feature type="modified residue" description="N6-acetyllysine" evidence="2">
    <location>
        <position position="173"/>
    </location>
</feature>
<feature type="modified residue" description="N6-acetyllysine" evidence="2">
    <location>
        <position position="177"/>
    </location>
</feature>
<feature type="modified residue" description="N6-acetyllysine" evidence="2">
    <location>
        <position position="180"/>
    </location>
</feature>
<feature type="modified residue" description="ADP-ribosylserine" evidence="1">
    <location>
        <position position="181"/>
    </location>
</feature>
<feature type="modified residue" description="N6-acetyllysine" evidence="2">
    <location>
        <position position="182"/>
    </location>
</feature>
<feature type="modified residue" description="N6-acetyllysine" evidence="2">
    <location>
        <position position="183"/>
    </location>
</feature>
<feature type="modified residue" description="N6-acetyllysine" evidence="2">
    <location>
        <position position="184"/>
    </location>
</feature>
<feature type="modified residue" description="N6-acetyllysine" evidence="2">
    <location>
        <position position="185"/>
    </location>
</feature>
<feature type="disulfide bond" description="In disulfide HMGB1; alternate" evidence="4">
    <location>
        <begin position="23"/>
        <end position="45"/>
    </location>
</feature>
<feature type="cross-link" description="Isoglutamyl lysine isopeptide (Lys-Gln) (interchain with Q-?)" evidence="1">
    <location>
        <position position="28"/>
    </location>
</feature>
<feature type="cross-link" description="Isoglutamyl lysine isopeptide (Lys-Gln) (interchain with Q-?)" evidence="1">
    <location>
        <position position="43"/>
    </location>
</feature>
<feature type="cross-link" description="Isoglutamyl lysine isopeptide (Lys-Gln) (interchain with Q-?)" evidence="1">
    <location>
        <position position="44"/>
    </location>
</feature>
<feature type="cross-link" description="Isoglutamyl lysine isopeptide (Lys-Gln) (interchain with Q-?)" evidence="1">
    <location>
        <position position="68"/>
    </location>
</feature>
<feature type="cross-link" description="Isoglutamyl lysine isopeptide (Lys-Gln) (interchain with Q-?)" evidence="1">
    <location>
        <position position="180"/>
    </location>
</feature>
<feature type="cross-link" description="Isoglutamyl lysine isopeptide (Lys-Gln) (interchain with Q-?)" evidence="1">
    <location>
        <position position="182"/>
    </location>
</feature>
<feature type="cross-link" description="Isoglutamyl lysine isopeptide (Lys-Gln) (interchain with Q-?)" evidence="1">
    <location>
        <position position="183"/>
    </location>
</feature>
<feature type="cross-link" description="Isoglutamyl lysine isopeptide (Lys-Gln) (interchain with Q-?)" evidence="1">
    <location>
        <position position="184"/>
    </location>
</feature>
<accession>B1MTB0</accession>
<reference key="1">
    <citation type="submission" date="2008-03" db="EMBL/GenBank/DDBJ databases">
        <title>NISC comparative sequencing initiative.</title>
        <authorList>
            <person name="Antonellis A."/>
            <person name="Benjamin B."/>
            <person name="Blakesley R.W."/>
            <person name="Bouffard G.G."/>
            <person name="Brinkley C."/>
            <person name="Brooks S."/>
            <person name="Chu G."/>
            <person name="Chub I."/>
            <person name="Coleman H."/>
            <person name="Fuksenko T."/>
            <person name="Gestole M."/>
            <person name="Gregory M."/>
            <person name="Guan X."/>
            <person name="Gupta J."/>
            <person name="Gurson N."/>
            <person name="Han E."/>
            <person name="Han J."/>
            <person name="Hansen N."/>
            <person name="Hargrove A."/>
            <person name="Hines-Harris K."/>
            <person name="Ho S.-L."/>
            <person name="Hu P."/>
            <person name="Hunter G."/>
            <person name="Hurle B."/>
            <person name="Idol J.R."/>
            <person name="Johnson T."/>
            <person name="Knight E."/>
            <person name="Kwong P."/>
            <person name="Lee-Lin S.-Q."/>
            <person name="Legaspi R."/>
            <person name="Madden M."/>
            <person name="Maduro Q.L."/>
            <person name="Maduro V.B."/>
            <person name="Margulies E.H."/>
            <person name="Masiello C."/>
            <person name="Maskeri B."/>
            <person name="McDowell J."/>
            <person name="Merkulov G."/>
            <person name="Montemayor C."/>
            <person name="Mullikin J.C."/>
            <person name="Park M."/>
            <person name="Prasad A."/>
            <person name="Ramsahoye C."/>
            <person name="Reddix-Dugue N."/>
            <person name="Riebow N."/>
            <person name="Schandler K."/>
            <person name="Schueler M.G."/>
            <person name="Sison C."/>
            <person name="Smith L."/>
            <person name="Stantripop S."/>
            <person name="Thomas J.W."/>
            <person name="Thomas P.J."/>
            <person name="Tsipouri V."/>
            <person name="Young A."/>
            <person name="Green E.D."/>
        </authorList>
    </citation>
    <scope>NUCLEOTIDE SEQUENCE [LARGE SCALE MRNA]</scope>
</reference>
<organism>
    <name type="scientific">Plecturocebus moloch</name>
    <name type="common">Dusky titi monkey</name>
    <name type="synonym">Callicebus moloch</name>
    <dbReference type="NCBI Taxonomy" id="9523"/>
    <lineage>
        <taxon>Eukaryota</taxon>
        <taxon>Metazoa</taxon>
        <taxon>Chordata</taxon>
        <taxon>Craniata</taxon>
        <taxon>Vertebrata</taxon>
        <taxon>Euteleostomi</taxon>
        <taxon>Mammalia</taxon>
        <taxon>Eutheria</taxon>
        <taxon>Euarchontoglires</taxon>
        <taxon>Primates</taxon>
        <taxon>Haplorrhini</taxon>
        <taxon>Platyrrhini</taxon>
        <taxon>Pitheciidae</taxon>
        <taxon>Callicebinae</taxon>
        <taxon>Plecturocebus</taxon>
    </lineage>
</organism>
<proteinExistence type="inferred from homology"/>
<name>HMGB1_PLEMO</name>
<gene>
    <name type="primary">HMGB1</name>
</gene>
<evidence type="ECO:0000250" key="1">
    <source>
        <dbReference type="UniProtKB" id="P09429"/>
    </source>
</evidence>
<evidence type="ECO:0000250" key="2">
    <source>
        <dbReference type="UniProtKB" id="P10103"/>
    </source>
</evidence>
<evidence type="ECO:0000250" key="3">
    <source>
        <dbReference type="UniProtKB" id="P63158"/>
    </source>
</evidence>
<evidence type="ECO:0000250" key="4">
    <source>
        <dbReference type="UniProtKB" id="P63159"/>
    </source>
</evidence>
<evidence type="ECO:0000255" key="5">
    <source>
        <dbReference type="PROSITE-ProRule" id="PRU00267"/>
    </source>
</evidence>
<evidence type="ECO:0000256" key="6">
    <source>
        <dbReference type="SAM" id="MobiDB-lite"/>
    </source>
</evidence>
<evidence type="ECO:0000305" key="7"/>
<dbReference type="EMBL" id="DP000621">
    <property type="protein sequence ID" value="ACA53510.1"/>
    <property type="molecule type" value="Genomic_DNA"/>
</dbReference>
<dbReference type="BMRB" id="B1MTB0"/>
<dbReference type="SMR" id="B1MTB0"/>
<dbReference type="GO" id="GO:0005694">
    <property type="term" value="C:chromosome"/>
    <property type="evidence" value="ECO:0007669"/>
    <property type="project" value="UniProtKB-SubCell"/>
</dbReference>
<dbReference type="GO" id="GO:0005793">
    <property type="term" value="C:endoplasmic reticulum-Golgi intermediate compartment"/>
    <property type="evidence" value="ECO:0007669"/>
    <property type="project" value="UniProtKB-SubCell"/>
</dbReference>
<dbReference type="GO" id="GO:0005768">
    <property type="term" value="C:endosome"/>
    <property type="evidence" value="ECO:0007669"/>
    <property type="project" value="UniProtKB-SubCell"/>
</dbReference>
<dbReference type="GO" id="GO:0005576">
    <property type="term" value="C:extracellular region"/>
    <property type="evidence" value="ECO:0007669"/>
    <property type="project" value="UniProtKB-SubCell"/>
</dbReference>
<dbReference type="GO" id="GO:0005634">
    <property type="term" value="C:nucleus"/>
    <property type="evidence" value="ECO:0007669"/>
    <property type="project" value="UniProtKB-SubCell"/>
</dbReference>
<dbReference type="GO" id="GO:0005886">
    <property type="term" value="C:plasma membrane"/>
    <property type="evidence" value="ECO:0007669"/>
    <property type="project" value="UniProtKB-SubCell"/>
</dbReference>
<dbReference type="GO" id="GO:0000405">
    <property type="term" value="F:bubble DNA binding"/>
    <property type="evidence" value="ECO:0000250"/>
    <property type="project" value="AgBase"/>
</dbReference>
<dbReference type="GO" id="GO:0008301">
    <property type="term" value="F:DNA binding, bending"/>
    <property type="evidence" value="ECO:0000250"/>
    <property type="project" value="AgBase"/>
</dbReference>
<dbReference type="GO" id="GO:0000400">
    <property type="term" value="F:four-way junction DNA binding"/>
    <property type="evidence" value="ECO:0000250"/>
    <property type="project" value="AgBase"/>
</dbReference>
<dbReference type="GO" id="GO:0044378">
    <property type="term" value="F:non-sequence-specific DNA binding, bending"/>
    <property type="evidence" value="ECO:0000250"/>
    <property type="project" value="AgBase"/>
</dbReference>
<dbReference type="GO" id="GO:0097100">
    <property type="term" value="F:supercoiled DNA binding"/>
    <property type="evidence" value="ECO:0000250"/>
    <property type="project" value="AgBase"/>
</dbReference>
<dbReference type="GO" id="GO:0002250">
    <property type="term" value="P:adaptive immune response"/>
    <property type="evidence" value="ECO:0007669"/>
    <property type="project" value="UniProtKB-KW"/>
</dbReference>
<dbReference type="GO" id="GO:0006914">
    <property type="term" value="P:autophagy"/>
    <property type="evidence" value="ECO:0007669"/>
    <property type="project" value="UniProtKB-KW"/>
</dbReference>
<dbReference type="GO" id="GO:0006935">
    <property type="term" value="P:chemotaxis"/>
    <property type="evidence" value="ECO:0007669"/>
    <property type="project" value="UniProtKB-KW"/>
</dbReference>
<dbReference type="GO" id="GO:0032392">
    <property type="term" value="P:DNA geometric change"/>
    <property type="evidence" value="ECO:0000250"/>
    <property type="project" value="AgBase"/>
</dbReference>
<dbReference type="GO" id="GO:0006310">
    <property type="term" value="P:DNA recombination"/>
    <property type="evidence" value="ECO:0007669"/>
    <property type="project" value="UniProtKB-KW"/>
</dbReference>
<dbReference type="GO" id="GO:0006281">
    <property type="term" value="P:DNA repair"/>
    <property type="evidence" value="ECO:0007669"/>
    <property type="project" value="UniProtKB-KW"/>
</dbReference>
<dbReference type="GO" id="GO:0006954">
    <property type="term" value="P:inflammatory response"/>
    <property type="evidence" value="ECO:0007669"/>
    <property type="project" value="UniProtKB-KW"/>
</dbReference>
<dbReference type="GO" id="GO:0045087">
    <property type="term" value="P:innate immune response"/>
    <property type="evidence" value="ECO:0007669"/>
    <property type="project" value="UniProtKB-KW"/>
</dbReference>
<dbReference type="GO" id="GO:0006357">
    <property type="term" value="P:regulation of transcription by RNA polymerase II"/>
    <property type="evidence" value="ECO:0007669"/>
    <property type="project" value="TreeGrafter"/>
</dbReference>
<dbReference type="CDD" id="cd21978">
    <property type="entry name" value="HMG-box_HMGB_rpt1"/>
    <property type="match status" value="1"/>
</dbReference>
<dbReference type="CDD" id="cd21979">
    <property type="entry name" value="HMG-box_HMGB_rpt2"/>
    <property type="match status" value="1"/>
</dbReference>
<dbReference type="FunFam" id="1.10.30.10:FF:000006">
    <property type="entry name" value="High mobility group protein B1"/>
    <property type="match status" value="1"/>
</dbReference>
<dbReference type="FunFam" id="1.10.30.10:FF:000015">
    <property type="entry name" value="high mobility group protein B1"/>
    <property type="match status" value="1"/>
</dbReference>
<dbReference type="Gene3D" id="1.10.30.10">
    <property type="entry name" value="High mobility group box domain"/>
    <property type="match status" value="2"/>
</dbReference>
<dbReference type="InterPro" id="IPR009071">
    <property type="entry name" value="HMG_box_dom"/>
</dbReference>
<dbReference type="InterPro" id="IPR036910">
    <property type="entry name" value="HMG_box_dom_sf"/>
</dbReference>
<dbReference type="InterPro" id="IPR017967">
    <property type="entry name" value="HMG_boxA_CS"/>
</dbReference>
<dbReference type="InterPro" id="IPR050342">
    <property type="entry name" value="HMGB"/>
</dbReference>
<dbReference type="PANTHER" id="PTHR48112:SF35">
    <property type="entry name" value="HIGH MOBILITY GROUP PROTEIN B1"/>
    <property type="match status" value="1"/>
</dbReference>
<dbReference type="PANTHER" id="PTHR48112">
    <property type="entry name" value="HIGH MOBILITY GROUP PROTEIN DSP1"/>
    <property type="match status" value="1"/>
</dbReference>
<dbReference type="Pfam" id="PF00505">
    <property type="entry name" value="HMG_box"/>
    <property type="match status" value="1"/>
</dbReference>
<dbReference type="Pfam" id="PF09011">
    <property type="entry name" value="HMG_box_2"/>
    <property type="match status" value="1"/>
</dbReference>
<dbReference type="PRINTS" id="PR00886">
    <property type="entry name" value="HIGHMOBLTY12"/>
</dbReference>
<dbReference type="SMART" id="SM00398">
    <property type="entry name" value="HMG"/>
    <property type="match status" value="2"/>
</dbReference>
<dbReference type="SUPFAM" id="SSF47095">
    <property type="entry name" value="HMG-box"/>
    <property type="match status" value="2"/>
</dbReference>
<dbReference type="PROSITE" id="PS00353">
    <property type="entry name" value="HMG_BOX_1"/>
    <property type="match status" value="1"/>
</dbReference>
<dbReference type="PROSITE" id="PS50118">
    <property type="entry name" value="HMG_BOX_2"/>
    <property type="match status" value="2"/>
</dbReference>
<protein>
    <recommendedName>
        <fullName>High mobility group protein B1</fullName>
    </recommendedName>
    <alternativeName>
        <fullName>High mobility group protein 1</fullName>
        <shortName>HMG-1</shortName>
    </alternativeName>
</protein>
<keyword id="KW-0007">Acetylation</keyword>
<keyword id="KW-1064">Adaptive immunity</keyword>
<keyword id="KW-0013">ADP-ribosylation</keyword>
<keyword id="KW-0072">Autophagy</keyword>
<keyword id="KW-1003">Cell membrane</keyword>
<keyword id="KW-0145">Chemotaxis</keyword>
<keyword id="KW-0158">Chromosome</keyword>
<keyword id="KW-0963">Cytoplasm</keyword>
<keyword id="KW-1015">Disulfide bond</keyword>
<keyword id="KW-0227">DNA damage</keyword>
<keyword id="KW-0233">DNA recombination</keyword>
<keyword id="KW-0234">DNA repair</keyword>
<keyword id="KW-0238">DNA-binding</keyword>
<keyword id="KW-0967">Endosome</keyword>
<keyword id="KW-0391">Immunity</keyword>
<keyword id="KW-0395">Inflammatory response</keyword>
<keyword id="KW-0399">Innate immunity</keyword>
<keyword id="KW-1017">Isopeptide bond</keyword>
<keyword id="KW-0472">Membrane</keyword>
<keyword id="KW-0539">Nucleus</keyword>
<keyword id="KW-0558">Oxidation</keyword>
<keyword id="KW-0597">Phosphoprotein</keyword>
<keyword id="KW-0677">Repeat</keyword>
<keyword id="KW-0964">Secreted</keyword>